<reference key="1">
    <citation type="journal article" date="2004" name="Nat. Biotechnol.">
        <title>Complete genome sequence of the metabolically versatile photosynthetic bacterium Rhodopseudomonas palustris.</title>
        <authorList>
            <person name="Larimer F.W."/>
            <person name="Chain P."/>
            <person name="Hauser L."/>
            <person name="Lamerdin J.E."/>
            <person name="Malfatti S."/>
            <person name="Do L."/>
            <person name="Land M.L."/>
            <person name="Pelletier D.A."/>
            <person name="Beatty J.T."/>
            <person name="Lang A.S."/>
            <person name="Tabita F.R."/>
            <person name="Gibson J.L."/>
            <person name="Hanson T.E."/>
            <person name="Bobst C."/>
            <person name="Torres y Torres J.L."/>
            <person name="Peres C."/>
            <person name="Harrison F.H."/>
            <person name="Gibson J."/>
            <person name="Harwood C.S."/>
        </authorList>
    </citation>
    <scope>NUCLEOTIDE SEQUENCE [LARGE SCALE GENOMIC DNA]</scope>
    <source>
        <strain>ATCC BAA-98 / CGA009</strain>
    </source>
</reference>
<accession>Q6N5R2</accession>
<protein>
    <recommendedName>
        <fullName evidence="1">Lipid-A-disaccharide synthase</fullName>
        <ecNumber evidence="1">2.4.1.182</ecNumber>
    </recommendedName>
</protein>
<feature type="chain" id="PRO_0000255214" description="Lipid-A-disaccharide synthase">
    <location>
        <begin position="1"/>
        <end position="393"/>
    </location>
</feature>
<organism>
    <name type="scientific">Rhodopseudomonas palustris (strain ATCC BAA-98 / CGA009)</name>
    <dbReference type="NCBI Taxonomy" id="258594"/>
    <lineage>
        <taxon>Bacteria</taxon>
        <taxon>Pseudomonadati</taxon>
        <taxon>Pseudomonadota</taxon>
        <taxon>Alphaproteobacteria</taxon>
        <taxon>Hyphomicrobiales</taxon>
        <taxon>Nitrobacteraceae</taxon>
        <taxon>Rhodopseudomonas</taxon>
    </lineage>
</organism>
<dbReference type="EC" id="2.4.1.182" evidence="1"/>
<dbReference type="EMBL" id="BX572602">
    <property type="protein sequence ID" value="CAE28350.1"/>
    <property type="molecule type" value="Genomic_DNA"/>
</dbReference>
<dbReference type="RefSeq" id="WP_011158458.1">
    <property type="nucleotide sequence ID" value="NZ_CP116810.1"/>
</dbReference>
<dbReference type="SMR" id="Q6N5R2"/>
<dbReference type="STRING" id="258594.RPA2909"/>
<dbReference type="CAZy" id="GT19">
    <property type="family name" value="Glycosyltransferase Family 19"/>
</dbReference>
<dbReference type="GeneID" id="66893991"/>
<dbReference type="eggNOG" id="COG0763">
    <property type="taxonomic scope" value="Bacteria"/>
</dbReference>
<dbReference type="HOGENOM" id="CLU_036577_3_0_5"/>
<dbReference type="PhylomeDB" id="Q6N5R2"/>
<dbReference type="UniPathway" id="UPA00973"/>
<dbReference type="GO" id="GO:0016020">
    <property type="term" value="C:membrane"/>
    <property type="evidence" value="ECO:0007669"/>
    <property type="project" value="GOC"/>
</dbReference>
<dbReference type="GO" id="GO:0008915">
    <property type="term" value="F:lipid-A-disaccharide synthase activity"/>
    <property type="evidence" value="ECO:0007669"/>
    <property type="project" value="UniProtKB-UniRule"/>
</dbReference>
<dbReference type="GO" id="GO:0005543">
    <property type="term" value="F:phospholipid binding"/>
    <property type="evidence" value="ECO:0007669"/>
    <property type="project" value="TreeGrafter"/>
</dbReference>
<dbReference type="GO" id="GO:0009245">
    <property type="term" value="P:lipid A biosynthetic process"/>
    <property type="evidence" value="ECO:0007669"/>
    <property type="project" value="UniProtKB-UniRule"/>
</dbReference>
<dbReference type="HAMAP" id="MF_00392">
    <property type="entry name" value="LpxB"/>
    <property type="match status" value="1"/>
</dbReference>
<dbReference type="InterPro" id="IPR003835">
    <property type="entry name" value="Glyco_trans_19"/>
</dbReference>
<dbReference type="NCBIfam" id="TIGR00215">
    <property type="entry name" value="lpxB"/>
    <property type="match status" value="1"/>
</dbReference>
<dbReference type="PANTHER" id="PTHR30372">
    <property type="entry name" value="LIPID-A-DISACCHARIDE SYNTHASE"/>
    <property type="match status" value="1"/>
</dbReference>
<dbReference type="PANTHER" id="PTHR30372:SF4">
    <property type="entry name" value="LIPID-A-DISACCHARIDE SYNTHASE, MITOCHONDRIAL-RELATED"/>
    <property type="match status" value="1"/>
</dbReference>
<dbReference type="Pfam" id="PF02684">
    <property type="entry name" value="LpxB"/>
    <property type="match status" value="1"/>
</dbReference>
<dbReference type="SUPFAM" id="SSF53756">
    <property type="entry name" value="UDP-Glycosyltransferase/glycogen phosphorylase"/>
    <property type="match status" value="1"/>
</dbReference>
<gene>
    <name evidence="1" type="primary">lpxB</name>
    <name type="ordered locus">RPA2909</name>
</gene>
<name>LPXB_RHOPA</name>
<keyword id="KW-0328">Glycosyltransferase</keyword>
<keyword id="KW-0441">Lipid A biosynthesis</keyword>
<keyword id="KW-0444">Lipid biosynthesis</keyword>
<keyword id="KW-0443">Lipid metabolism</keyword>
<keyword id="KW-0808">Transferase</keyword>
<comment type="function">
    <text evidence="1">Condensation of UDP-2,3-diacylglucosamine and 2,3-diacylglucosamine-1-phosphate to form lipid A disaccharide, a precursor of lipid A, a phosphorylated glycolipid that anchors the lipopolysaccharide to the outer membrane of the cell.</text>
</comment>
<comment type="catalytic activity">
    <reaction evidence="1">
        <text>a lipid X + a UDP-2-N,3-O-bis[(3R)-3-hydroxyacyl]-alpha-D-glucosamine = a lipid A disaccharide + UDP + H(+)</text>
        <dbReference type="Rhea" id="RHEA:67828"/>
        <dbReference type="ChEBI" id="CHEBI:15378"/>
        <dbReference type="ChEBI" id="CHEBI:58223"/>
        <dbReference type="ChEBI" id="CHEBI:137748"/>
        <dbReference type="ChEBI" id="CHEBI:176338"/>
        <dbReference type="ChEBI" id="CHEBI:176343"/>
        <dbReference type="EC" id="2.4.1.182"/>
    </reaction>
</comment>
<comment type="pathway">
    <text evidence="1">Bacterial outer membrane biogenesis; LPS lipid A biosynthesis.</text>
</comment>
<comment type="similarity">
    <text evidence="1">Belongs to the LpxB family.</text>
</comment>
<sequence>MSGAAKTGDRVRTVYLIATEESGDRLGAALMRELRARLGSKVRFAGVGGHCMAGEGLASLFPIEELSIIGFAAVVQRLPMILKLIRRAVDAVLTAKPDILVIIDSPDFTHRVARRVRQRDPSIPIVDYVSPTVWAWRPGRARAMLGYVDHVLALLPFEPAEYRRLQGPPCSYVGHPLTEQFGSLRPDAAEQARREASPPVLLVLPGSRRSEVRHHAAAFGDTLARLKHEGVAFEAVLPTTPHLEGLVRAAVASWEVQPRIVVGEQDKRAAFRIAHAALAKSGTVTLELAIAGVPMVTAYRAGSVEIWIARRVVRPGTVILANLVMGDDVIPEFIQEDCVPDKLVPAVRDLLGNTPARRRQLAGFAKIDDILSTGEQTPSGRAADIVLDVMRHA</sequence>
<proteinExistence type="inferred from homology"/>
<evidence type="ECO:0000255" key="1">
    <source>
        <dbReference type="HAMAP-Rule" id="MF_00392"/>
    </source>
</evidence>